<protein>
    <recommendedName>
        <fullName evidence="1">Peptide methionine sulfoxide reductase MsrB</fullName>
        <ecNumber evidence="1">1.8.4.12</ecNumber>
    </recommendedName>
    <alternativeName>
        <fullName evidence="1">Peptide-methionine (R)-S-oxide reductase</fullName>
    </alternativeName>
</protein>
<name>MSRB_BURCM</name>
<sequence length="143" mass="16267">MSHDTDDKTYPYQKDDAELRRRLTPMQYEVTQHAATERAFTGEYTDTEDAGIYKCVVCSTPLFESGAKFHSGCGWPSYFKPLNGEVIDEKIDRTHGMVRVEVRCNHCGAHLGHVFEDGPRDKTGLRYCINSAALNFESRPENE</sequence>
<comment type="catalytic activity">
    <reaction evidence="1">
        <text>L-methionyl-[protein] + [thioredoxin]-disulfide + H2O = L-methionyl-(R)-S-oxide-[protein] + [thioredoxin]-dithiol</text>
        <dbReference type="Rhea" id="RHEA:24164"/>
        <dbReference type="Rhea" id="RHEA-COMP:10698"/>
        <dbReference type="Rhea" id="RHEA-COMP:10700"/>
        <dbReference type="Rhea" id="RHEA-COMP:12313"/>
        <dbReference type="Rhea" id="RHEA-COMP:12314"/>
        <dbReference type="ChEBI" id="CHEBI:15377"/>
        <dbReference type="ChEBI" id="CHEBI:16044"/>
        <dbReference type="ChEBI" id="CHEBI:29950"/>
        <dbReference type="ChEBI" id="CHEBI:45764"/>
        <dbReference type="ChEBI" id="CHEBI:50058"/>
        <dbReference type="EC" id="1.8.4.12"/>
    </reaction>
</comment>
<comment type="cofactor">
    <cofactor evidence="1">
        <name>Zn(2+)</name>
        <dbReference type="ChEBI" id="CHEBI:29105"/>
    </cofactor>
    <text evidence="1">Binds 1 zinc ion per subunit. The zinc ion is important for the structural integrity of the protein.</text>
</comment>
<comment type="similarity">
    <text evidence="1">Belongs to the MsrB Met sulfoxide reductase family.</text>
</comment>
<proteinExistence type="inferred from homology"/>
<accession>Q0BEH0</accession>
<dbReference type="EC" id="1.8.4.12" evidence="1"/>
<dbReference type="EMBL" id="CP000440">
    <property type="protein sequence ID" value="ABI87453.1"/>
    <property type="molecule type" value="Genomic_DNA"/>
</dbReference>
<dbReference type="RefSeq" id="WP_011657150.1">
    <property type="nucleotide sequence ID" value="NZ_CP009798.1"/>
</dbReference>
<dbReference type="SMR" id="Q0BEH0"/>
<dbReference type="GeneID" id="93085902"/>
<dbReference type="KEGG" id="bam:Bamb_1897"/>
<dbReference type="PATRIC" id="fig|339670.21.peg.3055"/>
<dbReference type="eggNOG" id="COG0229">
    <property type="taxonomic scope" value="Bacteria"/>
</dbReference>
<dbReference type="Proteomes" id="UP000000662">
    <property type="component" value="Chromosome 1"/>
</dbReference>
<dbReference type="GO" id="GO:0005737">
    <property type="term" value="C:cytoplasm"/>
    <property type="evidence" value="ECO:0007669"/>
    <property type="project" value="TreeGrafter"/>
</dbReference>
<dbReference type="GO" id="GO:0033743">
    <property type="term" value="F:peptide-methionine (R)-S-oxide reductase activity"/>
    <property type="evidence" value="ECO:0007669"/>
    <property type="project" value="UniProtKB-UniRule"/>
</dbReference>
<dbReference type="GO" id="GO:0008270">
    <property type="term" value="F:zinc ion binding"/>
    <property type="evidence" value="ECO:0007669"/>
    <property type="project" value="UniProtKB-UniRule"/>
</dbReference>
<dbReference type="GO" id="GO:0030091">
    <property type="term" value="P:protein repair"/>
    <property type="evidence" value="ECO:0007669"/>
    <property type="project" value="InterPro"/>
</dbReference>
<dbReference type="GO" id="GO:0006979">
    <property type="term" value="P:response to oxidative stress"/>
    <property type="evidence" value="ECO:0007669"/>
    <property type="project" value="InterPro"/>
</dbReference>
<dbReference type="FunFam" id="2.170.150.20:FF:000003">
    <property type="entry name" value="Peptide methionine sulfoxide reductase MsrB"/>
    <property type="match status" value="1"/>
</dbReference>
<dbReference type="Gene3D" id="2.170.150.20">
    <property type="entry name" value="Peptide methionine sulfoxide reductase"/>
    <property type="match status" value="1"/>
</dbReference>
<dbReference type="HAMAP" id="MF_01400">
    <property type="entry name" value="MsrB"/>
    <property type="match status" value="1"/>
</dbReference>
<dbReference type="InterPro" id="IPR028427">
    <property type="entry name" value="Met_Sox_Rdtase_MsrB"/>
</dbReference>
<dbReference type="InterPro" id="IPR002579">
    <property type="entry name" value="Met_Sox_Rdtase_MsrB_dom"/>
</dbReference>
<dbReference type="InterPro" id="IPR011057">
    <property type="entry name" value="Mss4-like_sf"/>
</dbReference>
<dbReference type="NCBIfam" id="TIGR00357">
    <property type="entry name" value="peptide-methionine (R)-S-oxide reductase MsrB"/>
    <property type="match status" value="1"/>
</dbReference>
<dbReference type="PANTHER" id="PTHR10173">
    <property type="entry name" value="METHIONINE SULFOXIDE REDUCTASE"/>
    <property type="match status" value="1"/>
</dbReference>
<dbReference type="PANTHER" id="PTHR10173:SF52">
    <property type="entry name" value="METHIONINE-R-SULFOXIDE REDUCTASE B1"/>
    <property type="match status" value="1"/>
</dbReference>
<dbReference type="Pfam" id="PF01641">
    <property type="entry name" value="SelR"/>
    <property type="match status" value="1"/>
</dbReference>
<dbReference type="SUPFAM" id="SSF51316">
    <property type="entry name" value="Mss4-like"/>
    <property type="match status" value="1"/>
</dbReference>
<dbReference type="PROSITE" id="PS51790">
    <property type="entry name" value="MSRB"/>
    <property type="match status" value="1"/>
</dbReference>
<gene>
    <name evidence="1" type="primary">msrB</name>
    <name type="ordered locus">Bamb_1897</name>
</gene>
<evidence type="ECO:0000255" key="1">
    <source>
        <dbReference type="HAMAP-Rule" id="MF_01400"/>
    </source>
</evidence>
<evidence type="ECO:0000255" key="2">
    <source>
        <dbReference type="PROSITE-ProRule" id="PRU01126"/>
    </source>
</evidence>
<keyword id="KW-0479">Metal-binding</keyword>
<keyword id="KW-0560">Oxidoreductase</keyword>
<keyword id="KW-0862">Zinc</keyword>
<reference key="1">
    <citation type="submission" date="2006-08" db="EMBL/GenBank/DDBJ databases">
        <title>Complete sequence of chromosome 1 of Burkholderia cepacia AMMD.</title>
        <authorList>
            <person name="Copeland A."/>
            <person name="Lucas S."/>
            <person name="Lapidus A."/>
            <person name="Barry K."/>
            <person name="Detter J.C."/>
            <person name="Glavina del Rio T."/>
            <person name="Hammon N."/>
            <person name="Israni S."/>
            <person name="Pitluck S."/>
            <person name="Bruce D."/>
            <person name="Chain P."/>
            <person name="Malfatti S."/>
            <person name="Shin M."/>
            <person name="Vergez L."/>
            <person name="Schmutz J."/>
            <person name="Larimer F."/>
            <person name="Land M."/>
            <person name="Hauser L."/>
            <person name="Kyrpides N."/>
            <person name="Kim E."/>
            <person name="Parke J."/>
            <person name="Coenye T."/>
            <person name="Konstantinidis K."/>
            <person name="Ramette A."/>
            <person name="Tiedje J."/>
            <person name="Richardson P."/>
        </authorList>
    </citation>
    <scope>NUCLEOTIDE SEQUENCE [LARGE SCALE GENOMIC DNA]</scope>
    <source>
        <strain>ATCC BAA-244 / DSM 16087 / CCUG 44356 / LMG 19182 / AMMD</strain>
    </source>
</reference>
<organism>
    <name type="scientific">Burkholderia ambifaria (strain ATCC BAA-244 / DSM 16087 / CCUG 44356 / LMG 19182 / AMMD)</name>
    <name type="common">Burkholderia cepacia (strain AMMD)</name>
    <dbReference type="NCBI Taxonomy" id="339670"/>
    <lineage>
        <taxon>Bacteria</taxon>
        <taxon>Pseudomonadati</taxon>
        <taxon>Pseudomonadota</taxon>
        <taxon>Betaproteobacteria</taxon>
        <taxon>Burkholderiales</taxon>
        <taxon>Burkholderiaceae</taxon>
        <taxon>Burkholderia</taxon>
        <taxon>Burkholderia cepacia complex</taxon>
    </lineage>
</organism>
<feature type="chain" id="PRO_1000145355" description="Peptide methionine sulfoxide reductase MsrB">
    <location>
        <begin position="1"/>
        <end position="143"/>
    </location>
</feature>
<feature type="domain" description="MsrB" evidence="2">
    <location>
        <begin position="16"/>
        <end position="139"/>
    </location>
</feature>
<feature type="active site" description="Nucleophile" evidence="2">
    <location>
        <position position="128"/>
    </location>
</feature>
<feature type="binding site" evidence="2">
    <location>
        <position position="55"/>
    </location>
    <ligand>
        <name>Zn(2+)</name>
        <dbReference type="ChEBI" id="CHEBI:29105"/>
    </ligand>
</feature>
<feature type="binding site" evidence="2">
    <location>
        <position position="58"/>
    </location>
    <ligand>
        <name>Zn(2+)</name>
        <dbReference type="ChEBI" id="CHEBI:29105"/>
    </ligand>
</feature>
<feature type="binding site" evidence="2">
    <location>
        <position position="104"/>
    </location>
    <ligand>
        <name>Zn(2+)</name>
        <dbReference type="ChEBI" id="CHEBI:29105"/>
    </ligand>
</feature>
<feature type="binding site" evidence="2">
    <location>
        <position position="107"/>
    </location>
    <ligand>
        <name>Zn(2+)</name>
        <dbReference type="ChEBI" id="CHEBI:29105"/>
    </ligand>
</feature>